<proteinExistence type="inferred from homology"/>
<reference key="1">
    <citation type="journal article" date="2005" name="Nat. Biotechnol.">
        <title>The complete genome sequence of the meat-borne lactic acid bacterium Lactobacillus sakei 23K.</title>
        <authorList>
            <person name="Chaillou S."/>
            <person name="Champomier-Verges M.-C."/>
            <person name="Cornet M."/>
            <person name="Crutz-Le Coq A.-M."/>
            <person name="Dudez A.-M."/>
            <person name="Martin V."/>
            <person name="Beaufils S."/>
            <person name="Darbon-Rongere E."/>
            <person name="Bossy R."/>
            <person name="Loux V."/>
            <person name="Zagorec M."/>
        </authorList>
    </citation>
    <scope>NUCLEOTIDE SEQUENCE [LARGE SCALE GENOMIC DNA]</scope>
    <source>
        <strain>23K</strain>
    </source>
</reference>
<feature type="chain" id="PRO_1000047579" description="Glutamate racemase">
    <location>
        <begin position="1"/>
        <end position="274"/>
    </location>
</feature>
<feature type="active site" description="Proton donor/acceptor" evidence="1">
    <location>
        <position position="73"/>
    </location>
</feature>
<feature type="active site" description="Proton donor/acceptor" evidence="1">
    <location>
        <position position="184"/>
    </location>
</feature>
<feature type="binding site" evidence="1">
    <location>
        <begin position="10"/>
        <end position="11"/>
    </location>
    <ligand>
        <name>substrate</name>
    </ligand>
</feature>
<feature type="binding site" evidence="1">
    <location>
        <begin position="42"/>
        <end position="43"/>
    </location>
    <ligand>
        <name>substrate</name>
    </ligand>
</feature>
<feature type="binding site" evidence="1">
    <location>
        <begin position="74"/>
        <end position="75"/>
    </location>
    <ligand>
        <name>substrate</name>
    </ligand>
</feature>
<feature type="binding site" evidence="1">
    <location>
        <begin position="185"/>
        <end position="186"/>
    </location>
    <ligand>
        <name>substrate</name>
    </ligand>
</feature>
<dbReference type="EC" id="5.1.1.3" evidence="1"/>
<dbReference type="EMBL" id="CR936503">
    <property type="protein sequence ID" value="CAI54706.1"/>
    <property type="molecule type" value="Genomic_DNA"/>
</dbReference>
<dbReference type="RefSeq" id="WP_011374114.1">
    <property type="nucleotide sequence ID" value="NC_007576.1"/>
</dbReference>
<dbReference type="SMR" id="Q38YM1"/>
<dbReference type="STRING" id="314315.LCA_0405"/>
<dbReference type="GeneID" id="57133235"/>
<dbReference type="KEGG" id="lsa:LCA_0405"/>
<dbReference type="eggNOG" id="COG0796">
    <property type="taxonomic scope" value="Bacteria"/>
</dbReference>
<dbReference type="HOGENOM" id="CLU_052344_0_1_9"/>
<dbReference type="OrthoDB" id="9801055at2"/>
<dbReference type="UniPathway" id="UPA00219"/>
<dbReference type="Proteomes" id="UP000002707">
    <property type="component" value="Chromosome"/>
</dbReference>
<dbReference type="GO" id="GO:0008881">
    <property type="term" value="F:glutamate racemase activity"/>
    <property type="evidence" value="ECO:0007669"/>
    <property type="project" value="UniProtKB-UniRule"/>
</dbReference>
<dbReference type="GO" id="GO:0071555">
    <property type="term" value="P:cell wall organization"/>
    <property type="evidence" value="ECO:0007669"/>
    <property type="project" value="UniProtKB-KW"/>
</dbReference>
<dbReference type="GO" id="GO:0009252">
    <property type="term" value="P:peptidoglycan biosynthetic process"/>
    <property type="evidence" value="ECO:0007669"/>
    <property type="project" value="UniProtKB-UniRule"/>
</dbReference>
<dbReference type="GO" id="GO:0008360">
    <property type="term" value="P:regulation of cell shape"/>
    <property type="evidence" value="ECO:0007669"/>
    <property type="project" value="UniProtKB-KW"/>
</dbReference>
<dbReference type="FunFam" id="3.40.50.1860:FF:000002">
    <property type="entry name" value="Glutamate racemase"/>
    <property type="match status" value="1"/>
</dbReference>
<dbReference type="Gene3D" id="3.40.50.1860">
    <property type="match status" value="2"/>
</dbReference>
<dbReference type="HAMAP" id="MF_00258">
    <property type="entry name" value="Glu_racemase"/>
    <property type="match status" value="1"/>
</dbReference>
<dbReference type="InterPro" id="IPR015942">
    <property type="entry name" value="Asp/Glu/hydantoin_racemase"/>
</dbReference>
<dbReference type="InterPro" id="IPR001920">
    <property type="entry name" value="Asp/Glu_race"/>
</dbReference>
<dbReference type="InterPro" id="IPR018187">
    <property type="entry name" value="Asp/Glu_racemase_AS_1"/>
</dbReference>
<dbReference type="InterPro" id="IPR033134">
    <property type="entry name" value="Asp/Glu_racemase_AS_2"/>
</dbReference>
<dbReference type="InterPro" id="IPR004391">
    <property type="entry name" value="Glu_race"/>
</dbReference>
<dbReference type="NCBIfam" id="TIGR00067">
    <property type="entry name" value="glut_race"/>
    <property type="match status" value="1"/>
</dbReference>
<dbReference type="PANTHER" id="PTHR21198">
    <property type="entry name" value="GLUTAMATE RACEMASE"/>
    <property type="match status" value="1"/>
</dbReference>
<dbReference type="PANTHER" id="PTHR21198:SF2">
    <property type="entry name" value="GLUTAMATE RACEMASE"/>
    <property type="match status" value="1"/>
</dbReference>
<dbReference type="Pfam" id="PF01177">
    <property type="entry name" value="Asp_Glu_race"/>
    <property type="match status" value="1"/>
</dbReference>
<dbReference type="SUPFAM" id="SSF53681">
    <property type="entry name" value="Aspartate/glutamate racemase"/>
    <property type="match status" value="2"/>
</dbReference>
<dbReference type="PROSITE" id="PS00923">
    <property type="entry name" value="ASP_GLU_RACEMASE_1"/>
    <property type="match status" value="1"/>
</dbReference>
<dbReference type="PROSITE" id="PS00924">
    <property type="entry name" value="ASP_GLU_RACEMASE_2"/>
    <property type="match status" value="1"/>
</dbReference>
<organism>
    <name type="scientific">Latilactobacillus sakei subsp. sakei (strain 23K)</name>
    <name type="common">Lactobacillus sakei subsp. sakei</name>
    <dbReference type="NCBI Taxonomy" id="314315"/>
    <lineage>
        <taxon>Bacteria</taxon>
        <taxon>Bacillati</taxon>
        <taxon>Bacillota</taxon>
        <taxon>Bacilli</taxon>
        <taxon>Lactobacillales</taxon>
        <taxon>Lactobacillaceae</taxon>
        <taxon>Latilactobacillus</taxon>
    </lineage>
</organism>
<gene>
    <name evidence="1" type="primary">murI</name>
    <name type="ordered locus">LCA_0405</name>
</gene>
<accession>Q38YM1</accession>
<comment type="function">
    <text evidence="1">Provides the (R)-glutamate required for cell wall biosynthesis.</text>
</comment>
<comment type="catalytic activity">
    <reaction evidence="1">
        <text>L-glutamate = D-glutamate</text>
        <dbReference type="Rhea" id="RHEA:12813"/>
        <dbReference type="ChEBI" id="CHEBI:29985"/>
        <dbReference type="ChEBI" id="CHEBI:29986"/>
        <dbReference type="EC" id="5.1.1.3"/>
    </reaction>
</comment>
<comment type="pathway">
    <text evidence="1">Cell wall biogenesis; peptidoglycan biosynthesis.</text>
</comment>
<comment type="similarity">
    <text evidence="1">Belongs to the aspartate/glutamate racemases family.</text>
</comment>
<evidence type="ECO:0000255" key="1">
    <source>
        <dbReference type="HAMAP-Rule" id="MF_00258"/>
    </source>
</evidence>
<keyword id="KW-0133">Cell shape</keyword>
<keyword id="KW-0961">Cell wall biogenesis/degradation</keyword>
<keyword id="KW-0413">Isomerase</keyword>
<keyword id="KW-0573">Peptidoglycan synthesis</keyword>
<keyword id="KW-1185">Reference proteome</keyword>
<sequence length="274" mass="29555">MKKQPIGFMDSGVGGLTLVKEARKRLPNEDMVFIGDQARLPYGEKPAATVREFAWQMANFLRHQEIKALVIACNTATAAALPDLQAQLAIPVIGVIKPGSIAALQTTHNRRVGVIATTGTIQSAAYSQQMAALNPDVQVTGLAAPQFVTMIEANQRHGQAVQTIVNQILQPLQKSEIDTLVLGCTHFPLLTTAIQTAVGPDVTLVNPAVQAITMLEEVLTQQQQLATTTPGTLRMYTTGSVAAFEEIAQQWLAQPDLTAQQVDIQKEKNDGPDR</sequence>
<name>MURI_LATSS</name>
<protein>
    <recommendedName>
        <fullName evidence="1">Glutamate racemase</fullName>
        <ecNumber evidence="1">5.1.1.3</ecNumber>
    </recommendedName>
</protein>